<proteinExistence type="inferred from homology"/>
<feature type="chain" id="PRO_0000154409" description="N-(5'-phosphoribosyl)anthranilate isomerase">
    <location>
        <begin position="1" status="less than"/>
        <end position="67"/>
    </location>
</feature>
<feature type="non-terminal residue">
    <location>
        <position position="1"/>
    </location>
</feature>
<accession>P14718</accession>
<keyword id="KW-0028">Amino-acid biosynthesis</keyword>
<keyword id="KW-0057">Aromatic amino acid biosynthesis</keyword>
<keyword id="KW-0413">Isomerase</keyword>
<keyword id="KW-0822">Tryptophan biosynthesis</keyword>
<sequence length="67" mass="7436">VAETHDHRVSEIISKKFDVVLAGGITFENVRKIVNSVKPVGIDVSSGVELNNRKNELLIKKICHNLI</sequence>
<reference key="1">
    <citation type="journal article" date="1988" name="Mol. Gen. Genet.">
        <title>Cloning of the trp genes from the archaebacterium Methanococcus voltae: nucleotide sequence of the trpBA genes.</title>
        <authorList>
            <person name="Sibold L."/>
            <person name="Henriquet M."/>
        </authorList>
    </citation>
    <scope>NUCLEOTIDE SEQUENCE [GENOMIC DNA]</scope>
    <source>
        <strain>ATCC 33273 / DSM 1537 / NBRC 100457 / OCM 70 / PS</strain>
    </source>
</reference>
<name>TRPF_METVO</name>
<organism>
    <name type="scientific">Methanococcus voltae</name>
    <dbReference type="NCBI Taxonomy" id="2188"/>
    <lineage>
        <taxon>Archaea</taxon>
        <taxon>Methanobacteriati</taxon>
        <taxon>Methanobacteriota</taxon>
        <taxon>Methanomada group</taxon>
        <taxon>Methanococci</taxon>
        <taxon>Methanococcales</taxon>
        <taxon>Methanococcaceae</taxon>
        <taxon>Methanococcus</taxon>
    </lineage>
</organism>
<protein>
    <recommendedName>
        <fullName>N-(5'-phosphoribosyl)anthranilate isomerase</fullName>
        <shortName>PRAI</shortName>
        <ecNumber>5.3.1.24</ecNumber>
    </recommendedName>
</protein>
<evidence type="ECO:0000305" key="1"/>
<dbReference type="EC" id="5.3.1.24"/>
<dbReference type="EMBL" id="M35130">
    <property type="protein sequence ID" value="AAA72853.1"/>
    <property type="molecule type" value="Genomic_DNA"/>
</dbReference>
<dbReference type="SMR" id="P14718"/>
<dbReference type="UniPathway" id="UPA00035">
    <property type="reaction ID" value="UER00042"/>
</dbReference>
<dbReference type="GO" id="GO:0004640">
    <property type="term" value="F:phosphoribosylanthranilate isomerase activity"/>
    <property type="evidence" value="ECO:0007669"/>
    <property type="project" value="UniProtKB-EC"/>
</dbReference>
<dbReference type="GO" id="GO:0000162">
    <property type="term" value="P:L-tryptophan biosynthetic process"/>
    <property type="evidence" value="ECO:0007669"/>
    <property type="project" value="UniProtKB-UniPathway"/>
</dbReference>
<dbReference type="Gene3D" id="3.20.20.70">
    <property type="entry name" value="Aldolase class I"/>
    <property type="match status" value="1"/>
</dbReference>
<dbReference type="InterPro" id="IPR013785">
    <property type="entry name" value="Aldolase_TIM"/>
</dbReference>
<dbReference type="InterPro" id="IPR001240">
    <property type="entry name" value="PRAI_dom"/>
</dbReference>
<dbReference type="InterPro" id="IPR011060">
    <property type="entry name" value="RibuloseP-bd_barrel"/>
</dbReference>
<dbReference type="InterPro" id="IPR044643">
    <property type="entry name" value="TrpF_fam"/>
</dbReference>
<dbReference type="PANTHER" id="PTHR42894">
    <property type="entry name" value="N-(5'-PHOSPHORIBOSYL)ANTHRANILATE ISOMERASE"/>
    <property type="match status" value="1"/>
</dbReference>
<dbReference type="PANTHER" id="PTHR42894:SF1">
    <property type="entry name" value="N-(5'-PHOSPHORIBOSYL)ANTHRANILATE ISOMERASE"/>
    <property type="match status" value="1"/>
</dbReference>
<dbReference type="Pfam" id="PF00697">
    <property type="entry name" value="PRAI"/>
    <property type="match status" value="1"/>
</dbReference>
<dbReference type="SUPFAM" id="SSF51366">
    <property type="entry name" value="Ribulose-phoshate binding barrel"/>
    <property type="match status" value="1"/>
</dbReference>
<comment type="catalytic activity">
    <reaction>
        <text>N-(5-phospho-beta-D-ribosyl)anthranilate = 1-(2-carboxyphenylamino)-1-deoxy-D-ribulose 5-phosphate</text>
        <dbReference type="Rhea" id="RHEA:21540"/>
        <dbReference type="ChEBI" id="CHEBI:18277"/>
        <dbReference type="ChEBI" id="CHEBI:58613"/>
        <dbReference type="EC" id="5.3.1.24"/>
    </reaction>
</comment>
<comment type="pathway">
    <text>Amino-acid biosynthesis; L-tryptophan biosynthesis; L-tryptophan from chorismate: step 3/5.</text>
</comment>
<comment type="similarity">
    <text evidence="1">Belongs to the TrpF family.</text>
</comment>
<gene>
    <name type="primary">trpF</name>
</gene>